<sequence length="108" mass="11189">MGLSLAAYAGAALAEIAGCFAVWAWWRLGASALWLVPGALSLGAFAWLLALTPVEAAGRSYAVYGGVYVAASLLWLWAVEGVRPDRWDMGGAALVLAGAAVILWAPRG</sequence>
<feature type="chain" id="PRO_1000000765" description="UPF0060 membrane protein Rsph17029_0436">
    <location>
        <begin position="1"/>
        <end position="108"/>
    </location>
</feature>
<feature type="transmembrane region" description="Helical" evidence="1">
    <location>
        <begin position="5"/>
        <end position="25"/>
    </location>
</feature>
<feature type="transmembrane region" description="Helical" evidence="1">
    <location>
        <begin position="32"/>
        <end position="52"/>
    </location>
</feature>
<feature type="transmembrane region" description="Helical" evidence="1">
    <location>
        <begin position="62"/>
        <end position="82"/>
    </location>
</feature>
<feature type="transmembrane region" description="Helical" evidence="1">
    <location>
        <begin position="86"/>
        <end position="106"/>
    </location>
</feature>
<protein>
    <recommendedName>
        <fullName evidence="1">UPF0060 membrane protein Rsph17029_0436</fullName>
    </recommendedName>
</protein>
<name>Y436_CERS1</name>
<comment type="subcellular location">
    <subcellularLocation>
        <location evidence="1">Cell inner membrane</location>
        <topology evidence="1">Multi-pass membrane protein</topology>
    </subcellularLocation>
</comment>
<comment type="similarity">
    <text evidence="1">Belongs to the UPF0060 family.</text>
</comment>
<organism>
    <name type="scientific">Cereibacter sphaeroides (strain ATCC 17029 / ATH 2.4.9)</name>
    <name type="common">Rhodobacter sphaeroides</name>
    <dbReference type="NCBI Taxonomy" id="349101"/>
    <lineage>
        <taxon>Bacteria</taxon>
        <taxon>Pseudomonadati</taxon>
        <taxon>Pseudomonadota</taxon>
        <taxon>Alphaproteobacteria</taxon>
        <taxon>Rhodobacterales</taxon>
        <taxon>Paracoccaceae</taxon>
        <taxon>Cereibacter</taxon>
    </lineage>
</organism>
<reference key="1">
    <citation type="submission" date="2007-02" db="EMBL/GenBank/DDBJ databases">
        <title>Complete sequence of chromosome 1 of Rhodobacter sphaeroides ATCC 17029.</title>
        <authorList>
            <person name="Copeland A."/>
            <person name="Lucas S."/>
            <person name="Lapidus A."/>
            <person name="Barry K."/>
            <person name="Detter J.C."/>
            <person name="Glavina del Rio T."/>
            <person name="Hammon N."/>
            <person name="Israni S."/>
            <person name="Dalin E."/>
            <person name="Tice H."/>
            <person name="Pitluck S."/>
            <person name="Kiss H."/>
            <person name="Brettin T."/>
            <person name="Bruce D."/>
            <person name="Han C."/>
            <person name="Tapia R."/>
            <person name="Gilna P."/>
            <person name="Schmutz J."/>
            <person name="Larimer F."/>
            <person name="Land M."/>
            <person name="Hauser L."/>
            <person name="Kyrpides N."/>
            <person name="Mikhailova N."/>
            <person name="Richardson P."/>
            <person name="Mackenzie C."/>
            <person name="Choudhary M."/>
            <person name="Donohue T.J."/>
            <person name="Kaplan S."/>
        </authorList>
    </citation>
    <scope>NUCLEOTIDE SEQUENCE [LARGE SCALE GENOMIC DNA]</scope>
    <source>
        <strain>ATCC 17029 / ATH 2.4.9</strain>
    </source>
</reference>
<dbReference type="EMBL" id="CP000577">
    <property type="protein sequence ID" value="ABN75552.1"/>
    <property type="molecule type" value="Genomic_DNA"/>
</dbReference>
<dbReference type="RefSeq" id="WP_002722633.1">
    <property type="nucleotide sequence ID" value="NC_009049.1"/>
</dbReference>
<dbReference type="SMR" id="A3PGT6"/>
<dbReference type="KEGG" id="rsh:Rsph17029_0436"/>
<dbReference type="HOGENOM" id="CLU_117653_1_0_5"/>
<dbReference type="GO" id="GO:0005886">
    <property type="term" value="C:plasma membrane"/>
    <property type="evidence" value="ECO:0007669"/>
    <property type="project" value="UniProtKB-SubCell"/>
</dbReference>
<dbReference type="HAMAP" id="MF_00010">
    <property type="entry name" value="UPF0060"/>
    <property type="match status" value="1"/>
</dbReference>
<dbReference type="InterPro" id="IPR003844">
    <property type="entry name" value="UPF0060"/>
</dbReference>
<dbReference type="NCBIfam" id="NF002586">
    <property type="entry name" value="PRK02237.1"/>
    <property type="match status" value="1"/>
</dbReference>
<dbReference type="PANTHER" id="PTHR36116">
    <property type="entry name" value="UPF0060 MEMBRANE PROTEIN YNFA"/>
    <property type="match status" value="1"/>
</dbReference>
<dbReference type="PANTHER" id="PTHR36116:SF1">
    <property type="entry name" value="UPF0060 MEMBRANE PROTEIN YNFA"/>
    <property type="match status" value="1"/>
</dbReference>
<dbReference type="Pfam" id="PF02694">
    <property type="entry name" value="UPF0060"/>
    <property type="match status" value="1"/>
</dbReference>
<dbReference type="SUPFAM" id="SSF103481">
    <property type="entry name" value="Multidrug resistance efflux transporter EmrE"/>
    <property type="match status" value="1"/>
</dbReference>
<accession>A3PGT6</accession>
<proteinExistence type="inferred from homology"/>
<evidence type="ECO:0000255" key="1">
    <source>
        <dbReference type="HAMAP-Rule" id="MF_00010"/>
    </source>
</evidence>
<keyword id="KW-0997">Cell inner membrane</keyword>
<keyword id="KW-1003">Cell membrane</keyword>
<keyword id="KW-0472">Membrane</keyword>
<keyword id="KW-0812">Transmembrane</keyword>
<keyword id="KW-1133">Transmembrane helix</keyword>
<gene>
    <name type="ordered locus">Rsph17029_0436</name>
</gene>